<dbReference type="EC" id="2.7.7.6" evidence="1"/>
<dbReference type="EMBL" id="CP000482">
    <property type="protein sequence ID" value="ABK98337.1"/>
    <property type="molecule type" value="Genomic_DNA"/>
</dbReference>
<dbReference type="RefSeq" id="WP_011734649.1">
    <property type="nucleotide sequence ID" value="NC_008609.1"/>
</dbReference>
<dbReference type="SMR" id="A1ALW7"/>
<dbReference type="STRING" id="338966.Ppro_0706"/>
<dbReference type="KEGG" id="ppd:Ppro_0706"/>
<dbReference type="eggNOG" id="COG0202">
    <property type="taxonomic scope" value="Bacteria"/>
</dbReference>
<dbReference type="HOGENOM" id="CLU_053084_0_1_7"/>
<dbReference type="OrthoDB" id="9805706at2"/>
<dbReference type="Proteomes" id="UP000006732">
    <property type="component" value="Chromosome"/>
</dbReference>
<dbReference type="GO" id="GO:0005737">
    <property type="term" value="C:cytoplasm"/>
    <property type="evidence" value="ECO:0007669"/>
    <property type="project" value="UniProtKB-ARBA"/>
</dbReference>
<dbReference type="GO" id="GO:0000428">
    <property type="term" value="C:DNA-directed RNA polymerase complex"/>
    <property type="evidence" value="ECO:0007669"/>
    <property type="project" value="UniProtKB-KW"/>
</dbReference>
<dbReference type="GO" id="GO:0003677">
    <property type="term" value="F:DNA binding"/>
    <property type="evidence" value="ECO:0007669"/>
    <property type="project" value="UniProtKB-UniRule"/>
</dbReference>
<dbReference type="GO" id="GO:0003899">
    <property type="term" value="F:DNA-directed RNA polymerase activity"/>
    <property type="evidence" value="ECO:0007669"/>
    <property type="project" value="UniProtKB-UniRule"/>
</dbReference>
<dbReference type="GO" id="GO:0046983">
    <property type="term" value="F:protein dimerization activity"/>
    <property type="evidence" value="ECO:0007669"/>
    <property type="project" value="InterPro"/>
</dbReference>
<dbReference type="GO" id="GO:0006351">
    <property type="term" value="P:DNA-templated transcription"/>
    <property type="evidence" value="ECO:0007669"/>
    <property type="project" value="UniProtKB-UniRule"/>
</dbReference>
<dbReference type="CDD" id="cd06928">
    <property type="entry name" value="RNAP_alpha_NTD"/>
    <property type="match status" value="1"/>
</dbReference>
<dbReference type="FunFam" id="1.10.150.20:FF:000001">
    <property type="entry name" value="DNA-directed RNA polymerase subunit alpha"/>
    <property type="match status" value="1"/>
</dbReference>
<dbReference type="FunFam" id="2.170.120.12:FF:000001">
    <property type="entry name" value="DNA-directed RNA polymerase subunit alpha"/>
    <property type="match status" value="1"/>
</dbReference>
<dbReference type="Gene3D" id="1.10.150.20">
    <property type="entry name" value="5' to 3' exonuclease, C-terminal subdomain"/>
    <property type="match status" value="1"/>
</dbReference>
<dbReference type="Gene3D" id="2.170.120.12">
    <property type="entry name" value="DNA-directed RNA polymerase, insert domain"/>
    <property type="match status" value="1"/>
</dbReference>
<dbReference type="Gene3D" id="3.30.1360.10">
    <property type="entry name" value="RNA polymerase, RBP11-like subunit"/>
    <property type="match status" value="1"/>
</dbReference>
<dbReference type="HAMAP" id="MF_00059">
    <property type="entry name" value="RNApol_bact_RpoA"/>
    <property type="match status" value="1"/>
</dbReference>
<dbReference type="InterPro" id="IPR011262">
    <property type="entry name" value="DNA-dir_RNA_pol_insert"/>
</dbReference>
<dbReference type="InterPro" id="IPR011263">
    <property type="entry name" value="DNA-dir_RNA_pol_RpoA/D/Rpb3"/>
</dbReference>
<dbReference type="InterPro" id="IPR011773">
    <property type="entry name" value="DNA-dir_RpoA"/>
</dbReference>
<dbReference type="InterPro" id="IPR036603">
    <property type="entry name" value="RBP11-like"/>
</dbReference>
<dbReference type="InterPro" id="IPR011260">
    <property type="entry name" value="RNAP_asu_C"/>
</dbReference>
<dbReference type="InterPro" id="IPR036643">
    <property type="entry name" value="RNApol_insert_sf"/>
</dbReference>
<dbReference type="NCBIfam" id="NF003513">
    <property type="entry name" value="PRK05182.1-2"/>
    <property type="match status" value="1"/>
</dbReference>
<dbReference type="NCBIfam" id="NF003519">
    <property type="entry name" value="PRK05182.2-5"/>
    <property type="match status" value="1"/>
</dbReference>
<dbReference type="NCBIfam" id="TIGR02027">
    <property type="entry name" value="rpoA"/>
    <property type="match status" value="1"/>
</dbReference>
<dbReference type="Pfam" id="PF01000">
    <property type="entry name" value="RNA_pol_A_bac"/>
    <property type="match status" value="1"/>
</dbReference>
<dbReference type="Pfam" id="PF03118">
    <property type="entry name" value="RNA_pol_A_CTD"/>
    <property type="match status" value="1"/>
</dbReference>
<dbReference type="Pfam" id="PF01193">
    <property type="entry name" value="RNA_pol_L"/>
    <property type="match status" value="1"/>
</dbReference>
<dbReference type="SMART" id="SM00662">
    <property type="entry name" value="RPOLD"/>
    <property type="match status" value="1"/>
</dbReference>
<dbReference type="SUPFAM" id="SSF47789">
    <property type="entry name" value="C-terminal domain of RNA polymerase alpha subunit"/>
    <property type="match status" value="1"/>
</dbReference>
<dbReference type="SUPFAM" id="SSF56553">
    <property type="entry name" value="Insert subdomain of RNA polymerase alpha subunit"/>
    <property type="match status" value="1"/>
</dbReference>
<dbReference type="SUPFAM" id="SSF55257">
    <property type="entry name" value="RBP11-like subunits of RNA polymerase"/>
    <property type="match status" value="1"/>
</dbReference>
<proteinExistence type="inferred from homology"/>
<comment type="function">
    <text evidence="1">DNA-dependent RNA polymerase catalyzes the transcription of DNA into RNA using the four ribonucleoside triphosphates as substrates.</text>
</comment>
<comment type="catalytic activity">
    <reaction evidence="1">
        <text>RNA(n) + a ribonucleoside 5'-triphosphate = RNA(n+1) + diphosphate</text>
        <dbReference type="Rhea" id="RHEA:21248"/>
        <dbReference type="Rhea" id="RHEA-COMP:14527"/>
        <dbReference type="Rhea" id="RHEA-COMP:17342"/>
        <dbReference type="ChEBI" id="CHEBI:33019"/>
        <dbReference type="ChEBI" id="CHEBI:61557"/>
        <dbReference type="ChEBI" id="CHEBI:140395"/>
        <dbReference type="EC" id="2.7.7.6"/>
    </reaction>
</comment>
<comment type="subunit">
    <text evidence="1">Homodimer. The RNAP catalytic core consists of 2 alpha, 1 beta, 1 beta' and 1 omega subunit. When a sigma factor is associated with the core the holoenzyme is formed, which can initiate transcription.</text>
</comment>
<comment type="domain">
    <text evidence="1">The N-terminal domain is essential for RNAP assembly and basal transcription, whereas the C-terminal domain is involved in interaction with transcriptional regulators and with upstream promoter elements.</text>
</comment>
<comment type="similarity">
    <text evidence="1">Belongs to the RNA polymerase alpha chain family.</text>
</comment>
<sequence length="340" mass="38204">MYKNWRDLIRPKQLQFEKESLSDTYGKFFAEPFERGFATTLGNSLRRILLSSLQGSAITSVRIKGVLHEFSAIQGVTEDVTDIILNLKGVRLKLHSVVQATIRVVHTGEGVVKAGDFVVGHNVEIMNPEHHIATCGKDAHFEMDMTVKMGKGYVSADKNRDEKAPVGTIPIDSIFSPIKKVNFTISNARVGQMTDYDKLTLEIWTDGSVKPDDALAYSAKIMKEQLSIFINFDEEAEPQAPEESQDEIDKINENLYRTVEELELSVRSANCLKNAGIKLIGELVSKTEAEMLKTQNFGRKSLNEIKDILSDMGLTFGMKLDSFPEPDMLRRLRGEQNEEE</sequence>
<reference key="1">
    <citation type="submission" date="2006-10" db="EMBL/GenBank/DDBJ databases">
        <title>Complete sequence of chromosome of Pelobacter propionicus DSM 2379.</title>
        <authorList>
            <consortium name="US DOE Joint Genome Institute"/>
            <person name="Copeland A."/>
            <person name="Lucas S."/>
            <person name="Lapidus A."/>
            <person name="Barry K."/>
            <person name="Detter J.C."/>
            <person name="Glavina del Rio T."/>
            <person name="Hammon N."/>
            <person name="Israni S."/>
            <person name="Dalin E."/>
            <person name="Tice H."/>
            <person name="Pitluck S."/>
            <person name="Saunders E."/>
            <person name="Brettin T."/>
            <person name="Bruce D."/>
            <person name="Han C."/>
            <person name="Tapia R."/>
            <person name="Schmutz J."/>
            <person name="Larimer F."/>
            <person name="Land M."/>
            <person name="Hauser L."/>
            <person name="Kyrpides N."/>
            <person name="Kim E."/>
            <person name="Lovley D."/>
            <person name="Richardson P."/>
        </authorList>
    </citation>
    <scope>NUCLEOTIDE SEQUENCE [LARGE SCALE GENOMIC DNA]</scope>
    <source>
        <strain>DSM 2379 / NBRC 103807 / OttBd1</strain>
    </source>
</reference>
<protein>
    <recommendedName>
        <fullName evidence="1">DNA-directed RNA polymerase subunit alpha</fullName>
        <shortName evidence="1">RNAP subunit alpha</shortName>
        <ecNumber evidence="1">2.7.7.6</ecNumber>
    </recommendedName>
    <alternativeName>
        <fullName evidence="1">RNA polymerase subunit alpha</fullName>
    </alternativeName>
    <alternativeName>
        <fullName evidence="1">Transcriptase subunit alpha</fullName>
    </alternativeName>
</protein>
<name>RPOA_PELPD</name>
<feature type="chain" id="PRO_0000296848" description="DNA-directed RNA polymerase subunit alpha">
    <location>
        <begin position="1"/>
        <end position="340"/>
    </location>
</feature>
<feature type="region of interest" description="Alpha N-terminal domain (alpha-NTD)" evidence="1">
    <location>
        <begin position="1"/>
        <end position="233"/>
    </location>
</feature>
<feature type="region of interest" description="Alpha C-terminal domain (alpha-CTD)" evidence="1">
    <location>
        <begin position="246"/>
        <end position="340"/>
    </location>
</feature>
<organism>
    <name type="scientific">Pelobacter propionicus (strain DSM 2379 / NBRC 103807 / OttBd1)</name>
    <dbReference type="NCBI Taxonomy" id="338966"/>
    <lineage>
        <taxon>Bacteria</taxon>
        <taxon>Pseudomonadati</taxon>
        <taxon>Thermodesulfobacteriota</taxon>
        <taxon>Desulfuromonadia</taxon>
        <taxon>Desulfuromonadales</taxon>
        <taxon>Desulfuromonadaceae</taxon>
        <taxon>Pelobacter</taxon>
    </lineage>
</organism>
<evidence type="ECO:0000255" key="1">
    <source>
        <dbReference type="HAMAP-Rule" id="MF_00059"/>
    </source>
</evidence>
<keyword id="KW-0240">DNA-directed RNA polymerase</keyword>
<keyword id="KW-0548">Nucleotidyltransferase</keyword>
<keyword id="KW-1185">Reference proteome</keyword>
<keyword id="KW-0804">Transcription</keyword>
<keyword id="KW-0808">Transferase</keyword>
<gene>
    <name evidence="1" type="primary">rpoA</name>
    <name type="ordered locus">Ppro_0706</name>
</gene>
<accession>A1ALW7</accession>